<name>RIMO_NITV2</name>
<evidence type="ECO:0000255" key="1">
    <source>
        <dbReference type="HAMAP-Rule" id="MF_01865"/>
    </source>
</evidence>
<evidence type="ECO:0000255" key="2">
    <source>
        <dbReference type="PROSITE-ProRule" id="PRU01266"/>
    </source>
</evidence>
<comment type="function">
    <text evidence="1">Catalyzes the methylthiolation of an aspartic acid residue of ribosomal protein uS12.</text>
</comment>
<comment type="catalytic activity">
    <reaction evidence="1">
        <text>L-aspartate(89)-[ribosomal protein uS12]-hydrogen + (sulfur carrier)-SH + AH2 + 2 S-adenosyl-L-methionine = 3-methylsulfanyl-L-aspartate(89)-[ribosomal protein uS12]-hydrogen + (sulfur carrier)-H + 5'-deoxyadenosine + L-methionine + A + S-adenosyl-L-homocysteine + 2 H(+)</text>
        <dbReference type="Rhea" id="RHEA:37087"/>
        <dbReference type="Rhea" id="RHEA-COMP:10460"/>
        <dbReference type="Rhea" id="RHEA-COMP:10461"/>
        <dbReference type="Rhea" id="RHEA-COMP:14737"/>
        <dbReference type="Rhea" id="RHEA-COMP:14739"/>
        <dbReference type="ChEBI" id="CHEBI:13193"/>
        <dbReference type="ChEBI" id="CHEBI:15378"/>
        <dbReference type="ChEBI" id="CHEBI:17319"/>
        <dbReference type="ChEBI" id="CHEBI:17499"/>
        <dbReference type="ChEBI" id="CHEBI:29917"/>
        <dbReference type="ChEBI" id="CHEBI:29961"/>
        <dbReference type="ChEBI" id="CHEBI:57844"/>
        <dbReference type="ChEBI" id="CHEBI:57856"/>
        <dbReference type="ChEBI" id="CHEBI:59789"/>
        <dbReference type="ChEBI" id="CHEBI:64428"/>
        <dbReference type="ChEBI" id="CHEBI:73599"/>
        <dbReference type="EC" id="2.8.4.4"/>
    </reaction>
</comment>
<comment type="cofactor">
    <cofactor evidence="1">
        <name>[4Fe-4S] cluster</name>
        <dbReference type="ChEBI" id="CHEBI:49883"/>
    </cofactor>
    <text evidence="1">Binds 2 [4Fe-4S] clusters. One cluster is coordinated with 3 cysteines and an exchangeable S-adenosyl-L-methionine.</text>
</comment>
<comment type="subcellular location">
    <subcellularLocation>
        <location evidence="1">Cytoplasm</location>
    </subcellularLocation>
</comment>
<comment type="similarity">
    <text evidence="1">Belongs to the methylthiotransferase family. RimO subfamily.</text>
</comment>
<reference key="1">
    <citation type="journal article" date="2004" name="Nat. Biotechnol.">
        <title>The genome sequence of the anaerobic, sulfate-reducing bacterium Desulfovibrio vulgaris Hildenborough.</title>
        <authorList>
            <person name="Heidelberg J.F."/>
            <person name="Seshadri R."/>
            <person name="Haveman S.A."/>
            <person name="Hemme C.L."/>
            <person name="Paulsen I.T."/>
            <person name="Kolonay J.F."/>
            <person name="Eisen J.A."/>
            <person name="Ward N.L."/>
            <person name="Methe B.A."/>
            <person name="Brinkac L.M."/>
            <person name="Daugherty S.C."/>
            <person name="DeBoy R.T."/>
            <person name="Dodson R.J."/>
            <person name="Durkin A.S."/>
            <person name="Madupu R."/>
            <person name="Nelson W.C."/>
            <person name="Sullivan S.A."/>
            <person name="Fouts D.E."/>
            <person name="Haft D.H."/>
            <person name="Selengut J."/>
            <person name="Peterson J.D."/>
            <person name="Davidsen T.M."/>
            <person name="Zafar N."/>
            <person name="Zhou L."/>
            <person name="Radune D."/>
            <person name="Dimitrov G."/>
            <person name="Hance M."/>
            <person name="Tran K."/>
            <person name="Khouri H.M."/>
            <person name="Gill J."/>
            <person name="Utterback T.R."/>
            <person name="Feldblyum T.V."/>
            <person name="Wall J.D."/>
            <person name="Voordouw G."/>
            <person name="Fraser C.M."/>
        </authorList>
    </citation>
    <scope>NUCLEOTIDE SEQUENCE [LARGE SCALE GENOMIC DNA]</scope>
    <source>
        <strain>ATCC 29579 / DSM 644 / CCUG 34227 / NCIMB 8303 / VKM B-1760 / Hildenborough</strain>
    </source>
</reference>
<dbReference type="EC" id="2.8.4.4" evidence="1"/>
<dbReference type="EMBL" id="AE017285">
    <property type="protein sequence ID" value="AAS97621.1"/>
    <property type="molecule type" value="Genomic_DNA"/>
</dbReference>
<dbReference type="RefSeq" id="WP_010940409.1">
    <property type="nucleotide sequence ID" value="NC_002937.3"/>
</dbReference>
<dbReference type="RefSeq" id="YP_012361.1">
    <property type="nucleotide sequence ID" value="NC_002937.3"/>
</dbReference>
<dbReference type="SMR" id="Q726F7"/>
<dbReference type="STRING" id="882.DVU_3151"/>
<dbReference type="PaxDb" id="882-DVU_3151"/>
<dbReference type="EnsemblBacteria" id="AAS97621">
    <property type="protein sequence ID" value="AAS97621"/>
    <property type="gene ID" value="DVU_3151"/>
</dbReference>
<dbReference type="KEGG" id="dvu:DVU_3151"/>
<dbReference type="PATRIC" id="fig|882.5.peg.2857"/>
<dbReference type="eggNOG" id="COG0621">
    <property type="taxonomic scope" value="Bacteria"/>
</dbReference>
<dbReference type="HOGENOM" id="CLU_018697_0_1_7"/>
<dbReference type="OrthoDB" id="9805215at2"/>
<dbReference type="PhylomeDB" id="Q726F7"/>
<dbReference type="Proteomes" id="UP000002194">
    <property type="component" value="Chromosome"/>
</dbReference>
<dbReference type="GO" id="GO:0005829">
    <property type="term" value="C:cytosol"/>
    <property type="evidence" value="ECO:0007669"/>
    <property type="project" value="TreeGrafter"/>
</dbReference>
<dbReference type="GO" id="GO:0051539">
    <property type="term" value="F:4 iron, 4 sulfur cluster binding"/>
    <property type="evidence" value="ECO:0007669"/>
    <property type="project" value="UniProtKB-UniRule"/>
</dbReference>
<dbReference type="GO" id="GO:0035599">
    <property type="term" value="F:aspartic acid methylthiotransferase activity"/>
    <property type="evidence" value="ECO:0007669"/>
    <property type="project" value="TreeGrafter"/>
</dbReference>
<dbReference type="GO" id="GO:0046872">
    <property type="term" value="F:metal ion binding"/>
    <property type="evidence" value="ECO:0007669"/>
    <property type="project" value="UniProtKB-KW"/>
</dbReference>
<dbReference type="GO" id="GO:0103039">
    <property type="term" value="F:protein methylthiotransferase activity"/>
    <property type="evidence" value="ECO:0007669"/>
    <property type="project" value="UniProtKB-EC"/>
</dbReference>
<dbReference type="GO" id="GO:0006400">
    <property type="term" value="P:tRNA modification"/>
    <property type="evidence" value="ECO:0007669"/>
    <property type="project" value="InterPro"/>
</dbReference>
<dbReference type="CDD" id="cd01335">
    <property type="entry name" value="Radical_SAM"/>
    <property type="match status" value="1"/>
</dbReference>
<dbReference type="FunFam" id="3.80.30.20:FF:000001">
    <property type="entry name" value="tRNA-2-methylthio-N(6)-dimethylallyladenosine synthase 2"/>
    <property type="match status" value="1"/>
</dbReference>
<dbReference type="Gene3D" id="3.40.50.12160">
    <property type="entry name" value="Methylthiotransferase, N-terminal domain"/>
    <property type="match status" value="1"/>
</dbReference>
<dbReference type="Gene3D" id="2.40.50.140">
    <property type="entry name" value="Nucleic acid-binding proteins"/>
    <property type="match status" value="1"/>
</dbReference>
<dbReference type="Gene3D" id="3.80.30.20">
    <property type="entry name" value="tm_1862 like domain"/>
    <property type="match status" value="1"/>
</dbReference>
<dbReference type="HAMAP" id="MF_01865">
    <property type="entry name" value="MTTase_RimO"/>
    <property type="match status" value="1"/>
</dbReference>
<dbReference type="InterPro" id="IPR006638">
    <property type="entry name" value="Elp3/MiaA/NifB-like_rSAM"/>
</dbReference>
<dbReference type="InterPro" id="IPR005839">
    <property type="entry name" value="Methylthiotransferase"/>
</dbReference>
<dbReference type="InterPro" id="IPR020612">
    <property type="entry name" value="Methylthiotransferase_CS"/>
</dbReference>
<dbReference type="InterPro" id="IPR013848">
    <property type="entry name" value="Methylthiotransferase_N"/>
</dbReference>
<dbReference type="InterPro" id="IPR038135">
    <property type="entry name" value="Methylthiotransferase_N_sf"/>
</dbReference>
<dbReference type="InterPro" id="IPR012340">
    <property type="entry name" value="NA-bd_OB-fold"/>
</dbReference>
<dbReference type="InterPro" id="IPR005840">
    <property type="entry name" value="Ribosomal_uS12_MeSTrfase_RimO"/>
</dbReference>
<dbReference type="InterPro" id="IPR007197">
    <property type="entry name" value="rSAM"/>
</dbReference>
<dbReference type="InterPro" id="IPR023404">
    <property type="entry name" value="rSAM_horseshoe"/>
</dbReference>
<dbReference type="InterPro" id="IPR002792">
    <property type="entry name" value="TRAM_dom"/>
</dbReference>
<dbReference type="NCBIfam" id="TIGR01125">
    <property type="entry name" value="30S ribosomal protein S12 methylthiotransferase RimO"/>
    <property type="match status" value="1"/>
</dbReference>
<dbReference type="NCBIfam" id="TIGR00089">
    <property type="entry name" value="MiaB/RimO family radical SAM methylthiotransferase"/>
    <property type="match status" value="1"/>
</dbReference>
<dbReference type="PANTHER" id="PTHR43837">
    <property type="entry name" value="RIBOSOMAL PROTEIN S12 METHYLTHIOTRANSFERASE RIMO"/>
    <property type="match status" value="1"/>
</dbReference>
<dbReference type="PANTHER" id="PTHR43837:SF1">
    <property type="entry name" value="RIBOSOMAL PROTEIN US12 METHYLTHIOTRANSFERASE RIMO"/>
    <property type="match status" value="1"/>
</dbReference>
<dbReference type="Pfam" id="PF04055">
    <property type="entry name" value="Radical_SAM"/>
    <property type="match status" value="1"/>
</dbReference>
<dbReference type="Pfam" id="PF18693">
    <property type="entry name" value="TRAM_2"/>
    <property type="match status" value="1"/>
</dbReference>
<dbReference type="Pfam" id="PF00919">
    <property type="entry name" value="UPF0004"/>
    <property type="match status" value="1"/>
</dbReference>
<dbReference type="SFLD" id="SFLDG01082">
    <property type="entry name" value="B12-binding_domain_containing"/>
    <property type="match status" value="1"/>
</dbReference>
<dbReference type="SFLD" id="SFLDG01061">
    <property type="entry name" value="methylthiotransferase"/>
    <property type="match status" value="1"/>
</dbReference>
<dbReference type="SFLD" id="SFLDF00274">
    <property type="entry name" value="ribosomal_protein_S12_methylth"/>
    <property type="match status" value="1"/>
</dbReference>
<dbReference type="SMART" id="SM00729">
    <property type="entry name" value="Elp3"/>
    <property type="match status" value="1"/>
</dbReference>
<dbReference type="SUPFAM" id="SSF102114">
    <property type="entry name" value="Radical SAM enzymes"/>
    <property type="match status" value="1"/>
</dbReference>
<dbReference type="PROSITE" id="PS51449">
    <property type="entry name" value="MTTASE_N"/>
    <property type="match status" value="1"/>
</dbReference>
<dbReference type="PROSITE" id="PS01278">
    <property type="entry name" value="MTTASE_RADICAL"/>
    <property type="match status" value="1"/>
</dbReference>
<dbReference type="PROSITE" id="PS51918">
    <property type="entry name" value="RADICAL_SAM"/>
    <property type="match status" value="1"/>
</dbReference>
<dbReference type="PROSITE" id="PS50926">
    <property type="entry name" value="TRAM"/>
    <property type="match status" value="1"/>
</dbReference>
<proteinExistence type="inferred from homology"/>
<protein>
    <recommendedName>
        <fullName evidence="1">Ribosomal protein uS12 methylthiotransferase RimO</fullName>
        <shortName evidence="1">uS12 MTTase</shortName>
        <shortName evidence="1">uS12 methylthiotransferase</shortName>
        <ecNumber evidence="1">2.8.4.4</ecNumber>
    </recommendedName>
    <alternativeName>
        <fullName evidence="1">Ribosomal protein uS12 (aspartate-C(3))-methylthiotransferase</fullName>
    </alternativeName>
    <alternativeName>
        <fullName evidence="1">Ribosome maturation factor RimO</fullName>
    </alternativeName>
</protein>
<sequence length="430" mass="47277">MISVYSISLGCPKNRVDTEHLLGSLGVAVQPVEHLSRADVVLINTCGFILPAVEESVRTIVETIDDLSGLRKRPLLAVAGCLVGRYGAKELASELPEVDVWLPNQDITAWPAMLAHALKLEGAVTPGRLLSTGPSYAWLKISDGCRHNCSFCTIPSIRGGHRSTPADVLEREARDLVAQGVRELVLVAQDVTAWGEDIGAPHGLATLLERLLPVPGLARLRLMYLYPAGLTRELLGFMRDAGAPLVPYFDVPLQHAHPDILSRMGRPFARDPRRVVERVRDFFPDAALRTSLIVGFPGETDEHYAALTSFVEETRFTHMGVFAYRAEEGTPAAEMPEQVEDRVKEWRRDALMEVQAEISEELLAVHEGTRQQVLVDAPHEEWPGLHTGRTWFQAPEIDGITYVSGPGVEPGALVEADIVETRTYDLVALA</sequence>
<feature type="chain" id="PRO_0000374808" description="Ribosomal protein uS12 methylthiotransferase RimO">
    <location>
        <begin position="1"/>
        <end position="430"/>
    </location>
</feature>
<feature type="domain" description="MTTase N-terminal" evidence="1">
    <location>
        <begin position="2"/>
        <end position="119"/>
    </location>
</feature>
<feature type="domain" description="Radical SAM core" evidence="2">
    <location>
        <begin position="131"/>
        <end position="361"/>
    </location>
</feature>
<feature type="domain" description="TRAM" evidence="1">
    <location>
        <begin position="364"/>
        <end position="430"/>
    </location>
</feature>
<feature type="binding site" evidence="1">
    <location>
        <position position="11"/>
    </location>
    <ligand>
        <name>[4Fe-4S] cluster</name>
        <dbReference type="ChEBI" id="CHEBI:49883"/>
        <label>1</label>
    </ligand>
</feature>
<feature type="binding site" evidence="1">
    <location>
        <position position="46"/>
    </location>
    <ligand>
        <name>[4Fe-4S] cluster</name>
        <dbReference type="ChEBI" id="CHEBI:49883"/>
        <label>1</label>
    </ligand>
</feature>
<feature type="binding site" evidence="1">
    <location>
        <position position="81"/>
    </location>
    <ligand>
        <name>[4Fe-4S] cluster</name>
        <dbReference type="ChEBI" id="CHEBI:49883"/>
        <label>1</label>
    </ligand>
</feature>
<feature type="binding site" evidence="1">
    <location>
        <position position="145"/>
    </location>
    <ligand>
        <name>[4Fe-4S] cluster</name>
        <dbReference type="ChEBI" id="CHEBI:49883"/>
        <label>2</label>
        <note>4Fe-4S-S-AdoMet</note>
    </ligand>
</feature>
<feature type="binding site" evidence="1">
    <location>
        <position position="149"/>
    </location>
    <ligand>
        <name>[4Fe-4S] cluster</name>
        <dbReference type="ChEBI" id="CHEBI:49883"/>
        <label>2</label>
        <note>4Fe-4S-S-AdoMet</note>
    </ligand>
</feature>
<feature type="binding site" evidence="1">
    <location>
        <position position="152"/>
    </location>
    <ligand>
        <name>[4Fe-4S] cluster</name>
        <dbReference type="ChEBI" id="CHEBI:49883"/>
        <label>2</label>
        <note>4Fe-4S-S-AdoMet</note>
    </ligand>
</feature>
<organism>
    <name type="scientific">Nitratidesulfovibrio vulgaris (strain ATCC 29579 / DSM 644 / CCUG 34227 / NCIMB 8303 / VKM B-1760 / Hildenborough)</name>
    <name type="common">Desulfovibrio vulgaris</name>
    <dbReference type="NCBI Taxonomy" id="882"/>
    <lineage>
        <taxon>Bacteria</taxon>
        <taxon>Pseudomonadati</taxon>
        <taxon>Thermodesulfobacteriota</taxon>
        <taxon>Desulfovibrionia</taxon>
        <taxon>Desulfovibrionales</taxon>
        <taxon>Desulfovibrionaceae</taxon>
        <taxon>Nitratidesulfovibrio</taxon>
    </lineage>
</organism>
<gene>
    <name evidence="1" type="primary">rimO</name>
    <name type="ordered locus">DVU_3151</name>
</gene>
<keyword id="KW-0004">4Fe-4S</keyword>
<keyword id="KW-0963">Cytoplasm</keyword>
<keyword id="KW-0408">Iron</keyword>
<keyword id="KW-0411">Iron-sulfur</keyword>
<keyword id="KW-0479">Metal-binding</keyword>
<keyword id="KW-1185">Reference proteome</keyword>
<keyword id="KW-0949">S-adenosyl-L-methionine</keyword>
<keyword id="KW-0808">Transferase</keyword>
<accession>Q726F7</accession>